<keyword id="KW-0067">ATP-binding</keyword>
<keyword id="KW-0436">Ligase</keyword>
<keyword id="KW-0547">Nucleotide-binding</keyword>
<keyword id="KW-1185">Reference proteome</keyword>
<sequence>MTSYNPASPDFPFTLGIEEEYQVVDPQTRELRSYITQILDRGRMILREQIKPELHQSMVEVGTQPCRTIQEARAEVVRLRGTIAGLARQHGLTIISAGTHPISSWMSQEITPFERYKGVVEEMQQLALQLLIFGMHVHVGMPDDEVAIELMNVARYFLPHILALSTSSPFWMGRNTGFKSYRSALFSNFPRTGIPPSFHSAAEFQNYVKLLIKTNCIDDAKKIYWDLRPHPYFGTLEFRVCDAATRVDECIALAALMQALVVKLHLMFSENTTFRVYRRAVIMENKWRAQRWGLDGKLIDFGKRAEVEAKALMHELVAFVDEVVDELGSRHEVEYLLNVADGGSSADRQLAVFRETNDLHAVVDNLIVETLEGVPVYQG</sequence>
<evidence type="ECO:0000255" key="1">
    <source>
        <dbReference type="HAMAP-Rule" id="MF_01609"/>
    </source>
</evidence>
<feature type="chain" id="PRO_0000337701" description="Putative glutamate--cysteine ligase 2">
    <location>
        <begin position="1"/>
        <end position="379"/>
    </location>
</feature>
<name>GCS2_ROSCS</name>
<comment type="function">
    <text evidence="1">ATP-dependent carboxylate-amine ligase which exhibits weak glutamate--cysteine ligase activity.</text>
</comment>
<comment type="catalytic activity">
    <reaction evidence="1">
        <text>L-cysteine + L-glutamate + ATP = gamma-L-glutamyl-L-cysteine + ADP + phosphate + H(+)</text>
        <dbReference type="Rhea" id="RHEA:13285"/>
        <dbReference type="ChEBI" id="CHEBI:15378"/>
        <dbReference type="ChEBI" id="CHEBI:29985"/>
        <dbReference type="ChEBI" id="CHEBI:30616"/>
        <dbReference type="ChEBI" id="CHEBI:35235"/>
        <dbReference type="ChEBI" id="CHEBI:43474"/>
        <dbReference type="ChEBI" id="CHEBI:58173"/>
        <dbReference type="ChEBI" id="CHEBI:456216"/>
        <dbReference type="EC" id="6.3.2.2"/>
    </reaction>
</comment>
<comment type="similarity">
    <text evidence="1">Belongs to the glutamate--cysteine ligase type 2 family. YbdK subfamily.</text>
</comment>
<proteinExistence type="inferred from homology"/>
<reference key="1">
    <citation type="submission" date="2007-08" db="EMBL/GenBank/DDBJ databases">
        <title>Complete sequence of Roseiflexus castenholzii DSM 13941.</title>
        <authorList>
            <consortium name="US DOE Joint Genome Institute"/>
            <person name="Copeland A."/>
            <person name="Lucas S."/>
            <person name="Lapidus A."/>
            <person name="Barry K."/>
            <person name="Glavina del Rio T."/>
            <person name="Dalin E."/>
            <person name="Tice H."/>
            <person name="Pitluck S."/>
            <person name="Thompson L.S."/>
            <person name="Brettin T."/>
            <person name="Bruce D."/>
            <person name="Detter J.C."/>
            <person name="Han C."/>
            <person name="Tapia R."/>
            <person name="Schmutz J."/>
            <person name="Larimer F."/>
            <person name="Land M."/>
            <person name="Hauser L."/>
            <person name="Kyrpides N."/>
            <person name="Mikhailova N."/>
            <person name="Bryant D.A."/>
            <person name="Hanada S."/>
            <person name="Tsukatani Y."/>
            <person name="Richardson P."/>
        </authorList>
    </citation>
    <scope>NUCLEOTIDE SEQUENCE [LARGE SCALE GENOMIC DNA]</scope>
    <source>
        <strain>DSM 13941 / HLO8</strain>
    </source>
</reference>
<organism>
    <name type="scientific">Roseiflexus castenholzii (strain DSM 13941 / HLO8)</name>
    <dbReference type="NCBI Taxonomy" id="383372"/>
    <lineage>
        <taxon>Bacteria</taxon>
        <taxon>Bacillati</taxon>
        <taxon>Chloroflexota</taxon>
        <taxon>Chloroflexia</taxon>
        <taxon>Chloroflexales</taxon>
        <taxon>Roseiflexineae</taxon>
        <taxon>Roseiflexaceae</taxon>
        <taxon>Roseiflexus</taxon>
    </lineage>
</organism>
<accession>A7NK74</accession>
<dbReference type="EC" id="6.3.2.2" evidence="1"/>
<dbReference type="EMBL" id="CP000804">
    <property type="protein sequence ID" value="ABU57894.1"/>
    <property type="molecule type" value="Genomic_DNA"/>
</dbReference>
<dbReference type="RefSeq" id="WP_012120319.1">
    <property type="nucleotide sequence ID" value="NC_009767.1"/>
</dbReference>
<dbReference type="SMR" id="A7NK74"/>
<dbReference type="STRING" id="383372.Rcas_1802"/>
<dbReference type="KEGG" id="rca:Rcas_1802"/>
<dbReference type="eggNOG" id="COG2170">
    <property type="taxonomic scope" value="Bacteria"/>
</dbReference>
<dbReference type="HOGENOM" id="CLU_044848_1_0_0"/>
<dbReference type="OrthoDB" id="9769628at2"/>
<dbReference type="Proteomes" id="UP000000263">
    <property type="component" value="Chromosome"/>
</dbReference>
<dbReference type="GO" id="GO:0005524">
    <property type="term" value="F:ATP binding"/>
    <property type="evidence" value="ECO:0007669"/>
    <property type="project" value="UniProtKB-KW"/>
</dbReference>
<dbReference type="GO" id="GO:0004357">
    <property type="term" value="F:glutamate-cysteine ligase activity"/>
    <property type="evidence" value="ECO:0007669"/>
    <property type="project" value="UniProtKB-EC"/>
</dbReference>
<dbReference type="GO" id="GO:0042398">
    <property type="term" value="P:modified amino acid biosynthetic process"/>
    <property type="evidence" value="ECO:0007669"/>
    <property type="project" value="InterPro"/>
</dbReference>
<dbReference type="Gene3D" id="3.30.590.20">
    <property type="match status" value="1"/>
</dbReference>
<dbReference type="HAMAP" id="MF_01609">
    <property type="entry name" value="Glu_cys_ligase_2"/>
    <property type="match status" value="1"/>
</dbReference>
<dbReference type="InterPro" id="IPR050141">
    <property type="entry name" value="GCL_type2/YbdK_subfam"/>
</dbReference>
<dbReference type="InterPro" id="IPR006336">
    <property type="entry name" value="GCS2"/>
</dbReference>
<dbReference type="InterPro" id="IPR014746">
    <property type="entry name" value="Gln_synth/guanido_kin_cat_dom"/>
</dbReference>
<dbReference type="InterPro" id="IPR011793">
    <property type="entry name" value="YbdK"/>
</dbReference>
<dbReference type="NCBIfam" id="TIGR02050">
    <property type="entry name" value="gshA_cyan_rel"/>
    <property type="match status" value="1"/>
</dbReference>
<dbReference type="NCBIfam" id="NF010039">
    <property type="entry name" value="PRK13515.1"/>
    <property type="match status" value="1"/>
</dbReference>
<dbReference type="PANTHER" id="PTHR36510">
    <property type="entry name" value="GLUTAMATE--CYSTEINE LIGASE 2-RELATED"/>
    <property type="match status" value="1"/>
</dbReference>
<dbReference type="PANTHER" id="PTHR36510:SF1">
    <property type="entry name" value="GLUTAMATE--CYSTEINE LIGASE 2-RELATED"/>
    <property type="match status" value="1"/>
</dbReference>
<dbReference type="Pfam" id="PF04107">
    <property type="entry name" value="GCS2"/>
    <property type="match status" value="1"/>
</dbReference>
<dbReference type="SUPFAM" id="SSF55931">
    <property type="entry name" value="Glutamine synthetase/guanido kinase"/>
    <property type="match status" value="1"/>
</dbReference>
<gene>
    <name type="ordered locus">Rcas_1802</name>
</gene>
<protein>
    <recommendedName>
        <fullName evidence="1">Putative glutamate--cysteine ligase 2</fullName>
        <ecNumber evidence="1">6.3.2.2</ecNumber>
    </recommendedName>
    <alternativeName>
        <fullName evidence="1">Gamma-glutamylcysteine synthetase 2</fullName>
        <shortName evidence="1">GCS 2</shortName>
        <shortName evidence="1">Gamma-GCS 2</shortName>
    </alternativeName>
</protein>